<feature type="chain" id="PRO_0000149854" description="Diaminopimelate epimerase">
    <location>
        <begin position="1"/>
        <end position="289"/>
    </location>
</feature>
<feature type="active site" description="Proton donor" evidence="1">
    <location>
        <position position="87"/>
    </location>
</feature>
<feature type="active site" description="Proton acceptor" evidence="1">
    <location>
        <position position="226"/>
    </location>
</feature>
<feature type="binding site" evidence="1">
    <location>
        <position position="11"/>
    </location>
    <ligand>
        <name>substrate</name>
    </ligand>
</feature>
<feature type="binding site" evidence="1">
    <location>
        <position position="78"/>
    </location>
    <ligand>
        <name>substrate</name>
    </ligand>
</feature>
<feature type="binding site" evidence="1">
    <location>
        <begin position="88"/>
        <end position="89"/>
    </location>
    <ligand>
        <name>substrate</name>
    </ligand>
</feature>
<feature type="binding site" evidence="1">
    <location>
        <position position="163"/>
    </location>
    <ligand>
        <name>substrate</name>
    </ligand>
</feature>
<feature type="binding site" evidence="1">
    <location>
        <position position="199"/>
    </location>
    <ligand>
        <name>substrate</name>
    </ligand>
</feature>
<feature type="binding site" evidence="1">
    <location>
        <begin position="217"/>
        <end position="218"/>
    </location>
    <ligand>
        <name>substrate</name>
    </ligand>
</feature>
<feature type="binding site" evidence="1">
    <location>
        <begin position="227"/>
        <end position="228"/>
    </location>
    <ligand>
        <name>substrate</name>
    </ligand>
</feature>
<feature type="site" description="Could be important to modulate the pK values of the two catalytic cysteine residues" evidence="1">
    <location>
        <position position="165"/>
    </location>
</feature>
<feature type="site" description="Could be important to modulate the pK values of the two catalytic cysteine residues" evidence="1">
    <location>
        <position position="217"/>
    </location>
</feature>
<proteinExistence type="inferred from homology"/>
<evidence type="ECO:0000255" key="1">
    <source>
        <dbReference type="HAMAP-Rule" id="MF_00197"/>
    </source>
</evidence>
<accession>P63898</accession>
<accession>A0A1R3Y1Z6</accession>
<accession>O33231</accession>
<accession>X2BLD2</accession>
<gene>
    <name evidence="1" type="primary">dapF</name>
    <name type="ordered locus">BQ2027_MB2745C</name>
</gene>
<comment type="function">
    <text evidence="1">Catalyzes the stereoinversion of LL-2,6-diaminopimelate (L,L-DAP) to meso-diaminopimelate (meso-DAP), a precursor of L-lysine and an essential component of the bacterial peptidoglycan.</text>
</comment>
<comment type="catalytic activity">
    <reaction evidence="1">
        <text>(2S,6S)-2,6-diaminopimelate = meso-2,6-diaminopimelate</text>
        <dbReference type="Rhea" id="RHEA:15393"/>
        <dbReference type="ChEBI" id="CHEBI:57609"/>
        <dbReference type="ChEBI" id="CHEBI:57791"/>
        <dbReference type="EC" id="5.1.1.7"/>
    </reaction>
</comment>
<comment type="pathway">
    <text evidence="1">Amino-acid biosynthesis; L-lysine biosynthesis via DAP pathway; DL-2,6-diaminopimelate from LL-2,6-diaminopimelate: step 1/1.</text>
</comment>
<comment type="subunit">
    <text evidence="1">Homodimer.</text>
</comment>
<comment type="subcellular location">
    <subcellularLocation>
        <location evidence="1">Cytoplasm</location>
    </subcellularLocation>
</comment>
<comment type="similarity">
    <text evidence="1">Belongs to the diaminopimelate epimerase family.</text>
</comment>
<keyword id="KW-0028">Amino-acid biosynthesis</keyword>
<keyword id="KW-0963">Cytoplasm</keyword>
<keyword id="KW-0413">Isomerase</keyword>
<keyword id="KW-0457">Lysine biosynthesis</keyword>
<keyword id="KW-1185">Reference proteome</keyword>
<dbReference type="EC" id="5.1.1.7" evidence="1"/>
<dbReference type="EMBL" id="LT708304">
    <property type="protein sequence ID" value="SIU01363.1"/>
    <property type="molecule type" value="Genomic_DNA"/>
</dbReference>
<dbReference type="RefSeq" id="NP_856391.1">
    <property type="nucleotide sequence ID" value="NC_002945.3"/>
</dbReference>
<dbReference type="RefSeq" id="WP_003413987.1">
    <property type="nucleotide sequence ID" value="NC_002945.4"/>
</dbReference>
<dbReference type="SMR" id="P63898"/>
<dbReference type="GeneID" id="45426713"/>
<dbReference type="KEGG" id="mbo:BQ2027_MB2745C"/>
<dbReference type="PATRIC" id="fig|233413.5.peg.3007"/>
<dbReference type="UniPathway" id="UPA00034">
    <property type="reaction ID" value="UER00025"/>
</dbReference>
<dbReference type="Proteomes" id="UP000001419">
    <property type="component" value="Chromosome"/>
</dbReference>
<dbReference type="GO" id="GO:0005829">
    <property type="term" value="C:cytosol"/>
    <property type="evidence" value="ECO:0007669"/>
    <property type="project" value="TreeGrafter"/>
</dbReference>
<dbReference type="GO" id="GO:0008837">
    <property type="term" value="F:diaminopimelate epimerase activity"/>
    <property type="evidence" value="ECO:0007669"/>
    <property type="project" value="UniProtKB-UniRule"/>
</dbReference>
<dbReference type="GO" id="GO:0009089">
    <property type="term" value="P:lysine biosynthetic process via diaminopimelate"/>
    <property type="evidence" value="ECO:0007669"/>
    <property type="project" value="UniProtKB-UniRule"/>
</dbReference>
<dbReference type="Gene3D" id="3.10.310.10">
    <property type="entry name" value="Diaminopimelate Epimerase, Chain A, domain 1"/>
    <property type="match status" value="2"/>
</dbReference>
<dbReference type="HAMAP" id="MF_00197">
    <property type="entry name" value="DAP_epimerase"/>
    <property type="match status" value="1"/>
</dbReference>
<dbReference type="InterPro" id="IPR018510">
    <property type="entry name" value="DAP_epimerase_AS"/>
</dbReference>
<dbReference type="InterPro" id="IPR001653">
    <property type="entry name" value="DAP_epimerase_DapF"/>
</dbReference>
<dbReference type="NCBIfam" id="TIGR00652">
    <property type="entry name" value="DapF"/>
    <property type="match status" value="1"/>
</dbReference>
<dbReference type="PANTHER" id="PTHR31689:SF0">
    <property type="entry name" value="DIAMINOPIMELATE EPIMERASE"/>
    <property type="match status" value="1"/>
</dbReference>
<dbReference type="PANTHER" id="PTHR31689">
    <property type="entry name" value="DIAMINOPIMELATE EPIMERASE, CHLOROPLASTIC"/>
    <property type="match status" value="1"/>
</dbReference>
<dbReference type="Pfam" id="PF01678">
    <property type="entry name" value="DAP_epimerase"/>
    <property type="match status" value="2"/>
</dbReference>
<dbReference type="SUPFAM" id="SSF54506">
    <property type="entry name" value="Diaminopimelate epimerase-like"/>
    <property type="match status" value="2"/>
</dbReference>
<dbReference type="PROSITE" id="PS01326">
    <property type="entry name" value="DAP_EPIMERASE"/>
    <property type="match status" value="1"/>
</dbReference>
<protein>
    <recommendedName>
        <fullName evidence="1">Diaminopimelate epimerase</fullName>
        <shortName evidence="1">DAP epimerase</shortName>
        <ecNumber evidence="1">5.1.1.7</ecNumber>
    </recommendedName>
    <alternativeName>
        <fullName evidence="1">PLP-independent amino acid racemase</fullName>
    </alternativeName>
</protein>
<sequence>MIFAKGHGTQNDFVLLPDVDAELVLTAARVAALCDRRKGLGADGVLRVTTAGAAQAVGVLDSLPEGVRVTDWYMDYRNADGSAAQMCGNGVRVFAHYLRASGLEVRDEFVVGSLAGPRPVTCHHVEAAYADVSVDMGKANRLGAGEAVVGGRRFHGLAVDVGNPHLACVDSQLTVDGLAALDVGAPVSFDGAQFPDGVNVEVLTAPVDGAVWMRVHERGVGETRSCGTGTVAAAVAALAAVGSPTGTLTVHVPGGEVVVTVTDATSFLRGPSVLVARGDLADDWWNAMG</sequence>
<name>DAPF_MYCBO</name>
<reference key="1">
    <citation type="journal article" date="2003" name="Proc. Natl. Acad. Sci. U.S.A.">
        <title>The complete genome sequence of Mycobacterium bovis.</title>
        <authorList>
            <person name="Garnier T."/>
            <person name="Eiglmeier K."/>
            <person name="Camus J.-C."/>
            <person name="Medina N."/>
            <person name="Mansoor H."/>
            <person name="Pryor M."/>
            <person name="Duthoy S."/>
            <person name="Grondin S."/>
            <person name="Lacroix C."/>
            <person name="Monsempe C."/>
            <person name="Simon S."/>
            <person name="Harris B."/>
            <person name="Atkin R."/>
            <person name="Doggett J."/>
            <person name="Mayes R."/>
            <person name="Keating L."/>
            <person name="Wheeler P.R."/>
            <person name="Parkhill J."/>
            <person name="Barrell B.G."/>
            <person name="Cole S.T."/>
            <person name="Gordon S.V."/>
            <person name="Hewinson R.G."/>
        </authorList>
    </citation>
    <scope>NUCLEOTIDE SEQUENCE [LARGE SCALE GENOMIC DNA]</scope>
    <source>
        <strain>ATCC BAA-935 / AF2122/97</strain>
    </source>
</reference>
<reference key="2">
    <citation type="journal article" date="2017" name="Genome Announc.">
        <title>Updated reference genome sequence and annotation of Mycobacterium bovis AF2122/97.</title>
        <authorList>
            <person name="Malone K.M."/>
            <person name="Farrell D."/>
            <person name="Stuber T.P."/>
            <person name="Schubert O.T."/>
            <person name="Aebersold R."/>
            <person name="Robbe-Austerman S."/>
            <person name="Gordon S.V."/>
        </authorList>
    </citation>
    <scope>NUCLEOTIDE SEQUENCE [LARGE SCALE GENOMIC DNA]</scope>
    <scope>GENOME REANNOTATION</scope>
    <source>
        <strain>ATCC BAA-935 / AF2122/97</strain>
    </source>
</reference>
<organism>
    <name type="scientific">Mycobacterium bovis (strain ATCC BAA-935 / AF2122/97)</name>
    <dbReference type="NCBI Taxonomy" id="233413"/>
    <lineage>
        <taxon>Bacteria</taxon>
        <taxon>Bacillati</taxon>
        <taxon>Actinomycetota</taxon>
        <taxon>Actinomycetes</taxon>
        <taxon>Mycobacteriales</taxon>
        <taxon>Mycobacteriaceae</taxon>
        <taxon>Mycobacterium</taxon>
        <taxon>Mycobacterium tuberculosis complex</taxon>
    </lineage>
</organism>